<reference key="1">
    <citation type="journal article" date="2005" name="Nucleic Acids Res.">
        <title>Genome dynamics and diversity of Shigella species, the etiologic agents of bacillary dysentery.</title>
        <authorList>
            <person name="Yang F."/>
            <person name="Yang J."/>
            <person name="Zhang X."/>
            <person name="Chen L."/>
            <person name="Jiang Y."/>
            <person name="Yan Y."/>
            <person name="Tang X."/>
            <person name="Wang J."/>
            <person name="Xiong Z."/>
            <person name="Dong J."/>
            <person name="Xue Y."/>
            <person name="Zhu Y."/>
            <person name="Xu X."/>
            <person name="Sun L."/>
            <person name="Chen S."/>
            <person name="Nie H."/>
            <person name="Peng J."/>
            <person name="Xu J."/>
            <person name="Wang Y."/>
            <person name="Yuan Z."/>
            <person name="Wen Y."/>
            <person name="Yao Z."/>
            <person name="Shen Y."/>
            <person name="Qiang B."/>
            <person name="Hou Y."/>
            <person name="Yu J."/>
            <person name="Jin Q."/>
        </authorList>
    </citation>
    <scope>NUCLEOTIDE SEQUENCE [LARGE SCALE GENOMIC DNA]</scope>
    <source>
        <strain>Sb227</strain>
    </source>
</reference>
<keyword id="KW-0450">Lipoyl</keyword>
<evidence type="ECO:0000255" key="1">
    <source>
        <dbReference type="HAMAP-Rule" id="MF_00272"/>
    </source>
</evidence>
<evidence type="ECO:0000255" key="2">
    <source>
        <dbReference type="PROSITE-ProRule" id="PRU01066"/>
    </source>
</evidence>
<feature type="chain" id="PRO_0000302437" description="Glycine cleavage system H protein">
    <location>
        <begin position="1"/>
        <end position="129"/>
    </location>
</feature>
<feature type="domain" description="Lipoyl-binding" evidence="2">
    <location>
        <begin position="24"/>
        <end position="106"/>
    </location>
</feature>
<feature type="modified residue" description="N6-lipoyllysine" evidence="1">
    <location>
        <position position="65"/>
    </location>
</feature>
<comment type="function">
    <text evidence="1">The glycine cleavage system catalyzes the degradation of glycine. The H protein shuttles the methylamine group of glycine from the P protein to the T protein.</text>
</comment>
<comment type="cofactor">
    <cofactor evidence="1">
        <name>(R)-lipoate</name>
        <dbReference type="ChEBI" id="CHEBI:83088"/>
    </cofactor>
    <text evidence="1">Binds 1 lipoyl cofactor covalently.</text>
</comment>
<comment type="subunit">
    <text evidence="1">The glycine cleavage system is composed of four proteins: P, T, L and H.</text>
</comment>
<comment type="similarity">
    <text evidence="1">Belongs to the GcvH family.</text>
</comment>
<protein>
    <recommendedName>
        <fullName evidence="1">Glycine cleavage system H protein</fullName>
    </recommendedName>
</protein>
<dbReference type="EMBL" id="CP000036">
    <property type="protein sequence ID" value="ABB67593.1"/>
    <property type="molecule type" value="Genomic_DNA"/>
</dbReference>
<dbReference type="RefSeq" id="WP_001295377.1">
    <property type="nucleotide sequence ID" value="NC_007613.1"/>
</dbReference>
<dbReference type="SMR" id="Q31WG5"/>
<dbReference type="GeneID" id="93779098"/>
<dbReference type="KEGG" id="sbo:SBO_3088"/>
<dbReference type="HOGENOM" id="CLU_097408_2_1_6"/>
<dbReference type="Proteomes" id="UP000007067">
    <property type="component" value="Chromosome"/>
</dbReference>
<dbReference type="GO" id="GO:0005829">
    <property type="term" value="C:cytosol"/>
    <property type="evidence" value="ECO:0007669"/>
    <property type="project" value="TreeGrafter"/>
</dbReference>
<dbReference type="GO" id="GO:0005960">
    <property type="term" value="C:glycine cleavage complex"/>
    <property type="evidence" value="ECO:0007669"/>
    <property type="project" value="InterPro"/>
</dbReference>
<dbReference type="GO" id="GO:0019464">
    <property type="term" value="P:glycine decarboxylation via glycine cleavage system"/>
    <property type="evidence" value="ECO:0007669"/>
    <property type="project" value="UniProtKB-UniRule"/>
</dbReference>
<dbReference type="CDD" id="cd06848">
    <property type="entry name" value="GCS_H"/>
    <property type="match status" value="1"/>
</dbReference>
<dbReference type="FunFam" id="2.40.50.100:FF:000011">
    <property type="entry name" value="Glycine cleavage system H protein"/>
    <property type="match status" value="1"/>
</dbReference>
<dbReference type="Gene3D" id="2.40.50.100">
    <property type="match status" value="1"/>
</dbReference>
<dbReference type="HAMAP" id="MF_00272">
    <property type="entry name" value="GcvH"/>
    <property type="match status" value="1"/>
</dbReference>
<dbReference type="InterPro" id="IPR003016">
    <property type="entry name" value="2-oxoA_DH_lipoyl-BS"/>
</dbReference>
<dbReference type="InterPro" id="IPR000089">
    <property type="entry name" value="Biotin_lipoyl"/>
</dbReference>
<dbReference type="InterPro" id="IPR002930">
    <property type="entry name" value="GCV_H"/>
</dbReference>
<dbReference type="InterPro" id="IPR033753">
    <property type="entry name" value="GCV_H/Fam206"/>
</dbReference>
<dbReference type="InterPro" id="IPR017453">
    <property type="entry name" value="GCV_H_sub"/>
</dbReference>
<dbReference type="InterPro" id="IPR011053">
    <property type="entry name" value="Single_hybrid_motif"/>
</dbReference>
<dbReference type="NCBIfam" id="TIGR00527">
    <property type="entry name" value="gcvH"/>
    <property type="match status" value="1"/>
</dbReference>
<dbReference type="NCBIfam" id="NF002270">
    <property type="entry name" value="PRK01202.1"/>
    <property type="match status" value="1"/>
</dbReference>
<dbReference type="PANTHER" id="PTHR11715">
    <property type="entry name" value="GLYCINE CLEAVAGE SYSTEM H PROTEIN"/>
    <property type="match status" value="1"/>
</dbReference>
<dbReference type="PANTHER" id="PTHR11715:SF3">
    <property type="entry name" value="GLYCINE CLEAVAGE SYSTEM H PROTEIN-RELATED"/>
    <property type="match status" value="1"/>
</dbReference>
<dbReference type="Pfam" id="PF01597">
    <property type="entry name" value="GCV_H"/>
    <property type="match status" value="1"/>
</dbReference>
<dbReference type="SUPFAM" id="SSF51230">
    <property type="entry name" value="Single hybrid motif"/>
    <property type="match status" value="1"/>
</dbReference>
<dbReference type="PROSITE" id="PS50968">
    <property type="entry name" value="BIOTINYL_LIPOYL"/>
    <property type="match status" value="1"/>
</dbReference>
<dbReference type="PROSITE" id="PS00189">
    <property type="entry name" value="LIPOYL"/>
    <property type="match status" value="1"/>
</dbReference>
<organism>
    <name type="scientific">Shigella boydii serotype 4 (strain Sb227)</name>
    <dbReference type="NCBI Taxonomy" id="300268"/>
    <lineage>
        <taxon>Bacteria</taxon>
        <taxon>Pseudomonadati</taxon>
        <taxon>Pseudomonadota</taxon>
        <taxon>Gammaproteobacteria</taxon>
        <taxon>Enterobacterales</taxon>
        <taxon>Enterobacteriaceae</taxon>
        <taxon>Shigella</taxon>
    </lineage>
</organism>
<gene>
    <name evidence="1" type="primary">gcvH</name>
    <name type="ordered locus">SBO_3088</name>
</gene>
<name>GCSH_SHIBS</name>
<sequence>MSNVPAELKYSKEHEWLRKEADGTYTVGITEHAQELLGDMVFVDLPEVGATVSAGDDCAVAESVKAASDIYAPVSGEIVAVNDALSDSPELVNSEPYAGGWIFKIKASDESELESLLDATAYEALLEDE</sequence>
<proteinExistence type="inferred from homology"/>
<accession>Q31WG5</accession>